<gene>
    <name type="ORF">PGTG_19611</name>
</gene>
<evidence type="ECO:0000255" key="1">
    <source>
        <dbReference type="HAMAP-Rule" id="MF_03153"/>
    </source>
</evidence>
<evidence type="ECO:0000256" key="2">
    <source>
        <dbReference type="SAM" id="MobiDB-lite"/>
    </source>
</evidence>
<protein>
    <recommendedName>
        <fullName evidence="1">U1 small nuclear ribonucleoprotein C-1</fullName>
        <shortName evidence="1">U1 snRNP C-1</shortName>
        <shortName evidence="1">U1-C-1</shortName>
        <shortName evidence="1">U1C-1</shortName>
    </recommendedName>
</protein>
<dbReference type="EMBL" id="DS178400">
    <property type="protein sequence ID" value="EFP93612.1"/>
    <property type="molecule type" value="Genomic_DNA"/>
</dbReference>
<dbReference type="RefSeq" id="XP_003338031.1">
    <property type="nucleotide sequence ID" value="XM_003337983.2"/>
</dbReference>
<dbReference type="SMR" id="E3LAN7"/>
<dbReference type="FunCoup" id="E3LAN7">
    <property type="interactions" value="88"/>
</dbReference>
<dbReference type="STRING" id="418459.E3LAN7"/>
<dbReference type="EnsemblFungi" id="EFP93612">
    <property type="protein sequence ID" value="EFP93612"/>
    <property type="gene ID" value="PGTG_19611"/>
</dbReference>
<dbReference type="GeneID" id="10534820"/>
<dbReference type="KEGG" id="pgr:PGTG_19611"/>
<dbReference type="VEuPathDB" id="FungiDB:PGTG_19611"/>
<dbReference type="eggNOG" id="KOG3454">
    <property type="taxonomic scope" value="Eukaryota"/>
</dbReference>
<dbReference type="HOGENOM" id="CLU_079697_1_0_1"/>
<dbReference type="InParanoid" id="E3LAN7"/>
<dbReference type="OMA" id="QMRPPLM"/>
<dbReference type="OrthoDB" id="76567at2759"/>
<dbReference type="Proteomes" id="UP000008783">
    <property type="component" value="Unassembled WGS sequence"/>
</dbReference>
<dbReference type="GO" id="GO:0000243">
    <property type="term" value="C:commitment complex"/>
    <property type="evidence" value="ECO:0007669"/>
    <property type="project" value="UniProtKB-UniRule"/>
</dbReference>
<dbReference type="GO" id="GO:0005685">
    <property type="term" value="C:U1 snRNP"/>
    <property type="evidence" value="ECO:0000318"/>
    <property type="project" value="GO_Central"/>
</dbReference>
<dbReference type="GO" id="GO:0071004">
    <property type="term" value="C:U2-type prespliceosome"/>
    <property type="evidence" value="ECO:0007669"/>
    <property type="project" value="UniProtKB-UniRule"/>
</dbReference>
<dbReference type="GO" id="GO:0003729">
    <property type="term" value="F:mRNA binding"/>
    <property type="evidence" value="ECO:0007669"/>
    <property type="project" value="UniProtKB-UniRule"/>
</dbReference>
<dbReference type="GO" id="GO:0030627">
    <property type="term" value="F:pre-mRNA 5'-splice site binding"/>
    <property type="evidence" value="ECO:0000318"/>
    <property type="project" value="GO_Central"/>
</dbReference>
<dbReference type="GO" id="GO:0030619">
    <property type="term" value="F:U1 snRNA binding"/>
    <property type="evidence" value="ECO:0007669"/>
    <property type="project" value="UniProtKB-UniRule"/>
</dbReference>
<dbReference type="GO" id="GO:0008270">
    <property type="term" value="F:zinc ion binding"/>
    <property type="evidence" value="ECO:0007669"/>
    <property type="project" value="UniProtKB-UniRule"/>
</dbReference>
<dbReference type="GO" id="GO:0000395">
    <property type="term" value="P:mRNA 5'-splice site recognition"/>
    <property type="evidence" value="ECO:0000318"/>
    <property type="project" value="GO_Central"/>
</dbReference>
<dbReference type="GO" id="GO:0000387">
    <property type="term" value="P:spliceosomal snRNP assembly"/>
    <property type="evidence" value="ECO:0007669"/>
    <property type="project" value="UniProtKB-UniRule"/>
</dbReference>
<dbReference type="FunFam" id="3.30.160.60:FF:000059">
    <property type="entry name" value="U1 small nuclear ribonucleoprotein C"/>
    <property type="match status" value="1"/>
</dbReference>
<dbReference type="Gene3D" id="3.30.160.60">
    <property type="entry name" value="Classic Zinc Finger"/>
    <property type="match status" value="1"/>
</dbReference>
<dbReference type="HAMAP" id="MF_03153">
    <property type="entry name" value="U1_C"/>
    <property type="match status" value="1"/>
</dbReference>
<dbReference type="InterPro" id="IPR000690">
    <property type="entry name" value="Matrin/U1-C_Znf_C2H2"/>
</dbReference>
<dbReference type="InterPro" id="IPR003604">
    <property type="entry name" value="Matrin/U1-like-C_Znf_C2H2"/>
</dbReference>
<dbReference type="InterPro" id="IPR013085">
    <property type="entry name" value="U1-CZ_Znf_C2H2"/>
</dbReference>
<dbReference type="InterPro" id="IPR017340">
    <property type="entry name" value="U1_snRNP-C"/>
</dbReference>
<dbReference type="InterPro" id="IPR036236">
    <property type="entry name" value="Znf_C2H2_sf"/>
</dbReference>
<dbReference type="PANTHER" id="PTHR31148">
    <property type="entry name" value="U1 SMALL NUCLEAR RIBONUCLEOPROTEIN C"/>
    <property type="match status" value="1"/>
</dbReference>
<dbReference type="PANTHER" id="PTHR31148:SF1">
    <property type="entry name" value="U1 SMALL NUCLEAR RIBONUCLEOPROTEIN C"/>
    <property type="match status" value="1"/>
</dbReference>
<dbReference type="Pfam" id="PF06220">
    <property type="entry name" value="zf-U1"/>
    <property type="match status" value="1"/>
</dbReference>
<dbReference type="PIRSF" id="PIRSF037969">
    <property type="entry name" value="U1_snRNP-C"/>
    <property type="match status" value="1"/>
</dbReference>
<dbReference type="SMART" id="SM00451">
    <property type="entry name" value="ZnF_U1"/>
    <property type="match status" value="1"/>
</dbReference>
<dbReference type="SUPFAM" id="SSF57667">
    <property type="entry name" value="beta-beta-alpha zinc fingers"/>
    <property type="match status" value="1"/>
</dbReference>
<dbReference type="PROSITE" id="PS50171">
    <property type="entry name" value="ZF_MATRIN"/>
    <property type="match status" value="1"/>
</dbReference>
<name>RU1C1_PUCGT</name>
<organism>
    <name type="scientific">Puccinia graminis f. sp. tritici (strain CRL 75-36-700-3 / race SCCL)</name>
    <name type="common">Black stem rust fungus</name>
    <dbReference type="NCBI Taxonomy" id="418459"/>
    <lineage>
        <taxon>Eukaryota</taxon>
        <taxon>Fungi</taxon>
        <taxon>Dikarya</taxon>
        <taxon>Basidiomycota</taxon>
        <taxon>Pucciniomycotina</taxon>
        <taxon>Pucciniomycetes</taxon>
        <taxon>Pucciniales</taxon>
        <taxon>Pucciniaceae</taxon>
        <taxon>Puccinia</taxon>
    </lineage>
</organism>
<accession>E3LAN7</accession>
<keyword id="KW-0479">Metal-binding</keyword>
<keyword id="KW-0539">Nucleus</keyword>
<keyword id="KW-1185">Reference proteome</keyword>
<keyword id="KW-0687">Ribonucleoprotein</keyword>
<keyword id="KW-0694">RNA-binding</keyword>
<keyword id="KW-0862">Zinc</keyword>
<keyword id="KW-0863">Zinc-finger</keyword>
<proteinExistence type="inferred from homology"/>
<feature type="chain" id="PRO_0000414292" description="U1 small nuclear ribonucleoprotein C-1">
    <location>
        <begin position="1"/>
        <end position="190"/>
    </location>
</feature>
<feature type="zinc finger region" description="Matrin-type" evidence="1">
    <location>
        <begin position="4"/>
        <end position="36"/>
    </location>
</feature>
<feature type="region of interest" description="Disordered" evidence="2">
    <location>
        <begin position="57"/>
        <end position="190"/>
    </location>
</feature>
<feature type="compositionally biased region" description="Pro residues" evidence="2">
    <location>
        <begin position="72"/>
        <end position="82"/>
    </location>
</feature>
<feature type="compositionally biased region" description="Low complexity" evidence="2">
    <location>
        <begin position="109"/>
        <end position="124"/>
    </location>
</feature>
<feature type="compositionally biased region" description="Pro residues" evidence="2">
    <location>
        <begin position="125"/>
        <end position="141"/>
    </location>
</feature>
<feature type="compositionally biased region" description="Basic and acidic residues" evidence="2">
    <location>
        <begin position="180"/>
        <end position="190"/>
    </location>
</feature>
<reference key="1">
    <citation type="journal article" date="2011" name="Proc. Natl. Acad. Sci. U.S.A.">
        <title>Obligate biotrophy features unraveled by the genomic analysis of rust fungi.</title>
        <authorList>
            <person name="Duplessis S."/>
            <person name="Cuomo C.A."/>
            <person name="Lin Y.-C."/>
            <person name="Aerts A."/>
            <person name="Tisserant E."/>
            <person name="Veneault-Fourrey C."/>
            <person name="Joly D.L."/>
            <person name="Hacquard S."/>
            <person name="Amselem J."/>
            <person name="Cantarel B.L."/>
            <person name="Chiu R."/>
            <person name="Coutinho P.M."/>
            <person name="Feau N."/>
            <person name="Field M."/>
            <person name="Frey P."/>
            <person name="Gelhaye E."/>
            <person name="Goldberg J."/>
            <person name="Grabherr M.G."/>
            <person name="Kodira C.D."/>
            <person name="Kohler A."/>
            <person name="Kuees U."/>
            <person name="Lindquist E.A."/>
            <person name="Lucas S.M."/>
            <person name="Mago R."/>
            <person name="Mauceli E."/>
            <person name="Morin E."/>
            <person name="Murat C."/>
            <person name="Pangilinan J.L."/>
            <person name="Park R."/>
            <person name="Pearson M."/>
            <person name="Quesneville H."/>
            <person name="Rouhier N."/>
            <person name="Sakthikumar S."/>
            <person name="Salamov A.A."/>
            <person name="Schmutz J."/>
            <person name="Selles B."/>
            <person name="Shapiro H."/>
            <person name="Tanguay P."/>
            <person name="Tuskan G.A."/>
            <person name="Henrissat B."/>
            <person name="Van de Peer Y."/>
            <person name="Rouze P."/>
            <person name="Ellis J.G."/>
            <person name="Dodds P.N."/>
            <person name="Schein J.E."/>
            <person name="Zhong S."/>
            <person name="Hamelin R.C."/>
            <person name="Grigoriev I.V."/>
            <person name="Szabo L.J."/>
            <person name="Martin F."/>
        </authorList>
    </citation>
    <scope>NUCLEOTIDE SEQUENCE [LARGE SCALE GENOMIC DNA]</scope>
    <source>
        <strain>CRL 75-36-700-3 / race SCCL</strain>
    </source>
</reference>
<reference key="2">
    <citation type="journal article" date="2017" name="G3 (Bethesda)">
        <title>Comparative analysis highlights variable genome content of wheat rusts and divergence of the mating loci.</title>
        <authorList>
            <person name="Cuomo C.A."/>
            <person name="Bakkeren G."/>
            <person name="Khalil H.B."/>
            <person name="Panwar V."/>
            <person name="Joly D."/>
            <person name="Linning R."/>
            <person name="Sakthikumar S."/>
            <person name="Song X."/>
            <person name="Adiconis X."/>
            <person name="Fan L."/>
            <person name="Goldberg J.M."/>
            <person name="Levin J.Z."/>
            <person name="Young S."/>
            <person name="Zeng Q."/>
            <person name="Anikster Y."/>
            <person name="Bruce M."/>
            <person name="Wang M."/>
            <person name="Yin C."/>
            <person name="McCallum B."/>
            <person name="Szabo L.J."/>
            <person name="Hulbert S."/>
            <person name="Chen X."/>
            <person name="Fellers J.P."/>
        </authorList>
    </citation>
    <scope>GENOME REANNOTATION</scope>
    <source>
        <strain>CRL 75-36-700-3 / race SCCL</strain>
    </source>
</reference>
<comment type="function">
    <text evidence="1">Component of the spliceosomal U1 snRNP, which is essential for recognition of the pre-mRNA 5' splice-site and the subsequent assembly of the spliceosome. U1-C is directly involved in initial 5' splice-site recognition for both constitutive and regulated alternative splicing. The interaction with the 5' splice-site seems to precede base-pairing between the pre-mRNA and the U1 snRNA. Stimulates commitment or early (E) complex formation by stabilizing the base pairing of the 5' end of the U1 snRNA and the 5' splice-site region.</text>
</comment>
<comment type="subunit">
    <text evidence="1">U1 snRNP is composed of the 7 core Sm proteins B/B', D1, D2, D3, E, F and G that assemble in a heptameric protein ring on the Sm site of the small nuclear RNA to form the core snRNP, and at least 3 U1 snRNP-specific proteins U1-70K, U1-A and U1-C. U1-C interacts with U1 snRNA and the 5' splice-site region of the pre-mRNA.</text>
</comment>
<comment type="subcellular location">
    <subcellularLocation>
        <location evidence="1">Nucleus</location>
    </subcellularLocation>
</comment>
<comment type="similarity">
    <text evidence="1">Belongs to the U1 small nuclear ribonucleoprotein C family.</text>
</comment>
<sequence>MGKYYCDYCDVFLVSESPSVRKAHNSGRNHLTNVRDYYSSLGHDKAQSYIDEITRMFETGGGNSTSNRGPGGNPPGSQPGPPNAGMSGPMRPPFSNSTAGPNMPPLPPAMLALMNGQNGMSSPGSGPPPMRFAGPPIPNNMPPGMMQPPHVNGYSSGPLPPQPQPASGGQGAPPLTARMNPDRARQLGLI</sequence>